<protein>
    <recommendedName>
        <fullName>Beta-chimaerin</fullName>
    </recommendedName>
    <alternativeName>
        <fullName>Beta-chimerin</fullName>
    </alternativeName>
    <alternativeName>
        <fullName>Rho GTPase-activating protein 3</fullName>
    </alternativeName>
</protein>
<sequence length="332" mass="38218">MCSQELWLENERKCAMVRKSKPSRKRQELLAIAFGVKVGLKGGFLWSPLKLFACSQISSLVRRAALTHNDNHFNYEKTHNFKVHTFRGPHWCEYCANFMWGLIAQGVRCSDCGLNVHKQCSKHVPNDCQPDLKRIKKVYCCDLTTLVKAHNTQRPMVVDICIREIEARGLKSEGLYRVSGFTEHIEDVKMAFDRDGEKADISANIYPDINIITGALKLYFRDLPIPIITYDTYSKFIEAAKISNADERLEAVHEVLMLLPPAHYETLRYLMIHLKKVTMNEKDNLMNAENLGIVFGPTLMRPPEDSTLTTLHDMRYQKLIVQILIENEDVLF</sequence>
<keyword id="KW-0025">Alternative splicing</keyword>
<keyword id="KW-0343">GTPase activation</keyword>
<keyword id="KW-0472">Membrane</keyword>
<keyword id="KW-0479">Metal-binding</keyword>
<keyword id="KW-1185">Reference proteome</keyword>
<keyword id="KW-0862">Zinc</keyword>
<keyword id="KW-0863">Zinc-finger</keyword>
<feature type="chain" id="PRO_0000056698" description="Beta-chimaerin">
    <location>
        <begin position="1"/>
        <end position="332"/>
    </location>
</feature>
<feature type="domain" description="Rho-GAP" evidence="2">
    <location>
        <begin position="141"/>
        <end position="332"/>
    </location>
</feature>
<feature type="zinc finger region" description="Phorbol-ester/DAG-type" evidence="3">
    <location>
        <begin position="78"/>
        <end position="128"/>
    </location>
</feature>
<feature type="site" description="Arginine finger; crucial for GTP hydrolysis by stabilizing the transition state" evidence="2">
    <location>
        <position position="177"/>
    </location>
</feature>
<feature type="splice variant" id="VSP_014243" description="In isoform 3." evidence="5">
    <location>
        <begin position="1"/>
        <end position="55"/>
    </location>
</feature>
<feature type="splice variant" id="VSP_014244" description="In isoform 2." evidence="4">
    <location>
        <begin position="1"/>
        <end position="50"/>
    </location>
</feature>
<feature type="splice variant" id="VSP_014245" description="In isoform 2." evidence="4">
    <original>LFACSQ</original>
    <variation>MALQCR</variation>
    <location>
        <begin position="51"/>
        <end position="56"/>
    </location>
</feature>
<feature type="splice variant" id="VSP_014246" description="In isoform 3." evidence="5">
    <original>Q</original>
    <variation>M</variation>
    <location>
        <position position="56"/>
    </location>
</feature>
<feature type="sequence conflict" description="In Ref. 3; AAH51139." evidence="6" ref="3">
    <original>V</original>
    <variation>G</variation>
    <location>
        <position position="138"/>
    </location>
</feature>
<gene>
    <name type="primary">Chn2</name>
    <name type="synonym">Arhgap3</name>
    <name type="synonym">Bch</name>
</gene>
<proteinExistence type="evidence at protein level"/>
<dbReference type="EMBL" id="AJ279014">
    <property type="protein sequence ID" value="CAC08453.1"/>
    <property type="status" value="ALT_FRAME"/>
    <property type="molecule type" value="mRNA"/>
</dbReference>
<dbReference type="EMBL" id="AK006398">
    <property type="protein sequence ID" value="BAB24568.1"/>
    <property type="molecule type" value="mRNA"/>
</dbReference>
<dbReference type="EMBL" id="BC051139">
    <property type="protein sequence ID" value="AAH51139.1"/>
    <property type="molecule type" value="mRNA"/>
</dbReference>
<dbReference type="CCDS" id="CCDS20154.1">
    <molecule id="Q80XD1-1"/>
</dbReference>
<dbReference type="CCDS" id="CCDS80535.1">
    <molecule id="Q80XD1-2"/>
</dbReference>
<dbReference type="CCDS" id="CCDS80536.1">
    <molecule id="Q80XD1-3"/>
</dbReference>
<dbReference type="RefSeq" id="NP_001298062.1">
    <molecule id="Q80XD1-2"/>
    <property type="nucleotide sequence ID" value="NM_001311133.1"/>
</dbReference>
<dbReference type="RefSeq" id="NP_001298063.1">
    <molecule id="Q80XD1-3"/>
    <property type="nucleotide sequence ID" value="NM_001311134.1"/>
</dbReference>
<dbReference type="RefSeq" id="NP_076032.2">
    <molecule id="Q80XD1-1"/>
    <property type="nucleotide sequence ID" value="NM_023543.2"/>
</dbReference>
<dbReference type="RefSeq" id="XP_006506641.1">
    <molecule id="Q80XD1-3"/>
    <property type="nucleotide sequence ID" value="XM_006506578.4"/>
</dbReference>
<dbReference type="SMR" id="Q80XD1"/>
<dbReference type="BioGRID" id="213803">
    <property type="interactions" value="71"/>
</dbReference>
<dbReference type="FunCoup" id="Q80XD1">
    <property type="interactions" value="9"/>
</dbReference>
<dbReference type="IntAct" id="Q80XD1">
    <property type="interactions" value="4"/>
</dbReference>
<dbReference type="MINT" id="Q80XD1"/>
<dbReference type="STRING" id="10090.ENSMUSP00000035908"/>
<dbReference type="PhosphoSitePlus" id="Q80XD1"/>
<dbReference type="SwissPalm" id="Q80XD1"/>
<dbReference type="PaxDb" id="10090-ENSMUSP00000035908"/>
<dbReference type="ProteomicsDB" id="283828">
    <molecule id="Q80XD1-1"/>
</dbReference>
<dbReference type="ProteomicsDB" id="283829">
    <molecule id="Q80XD1-2"/>
</dbReference>
<dbReference type="ProteomicsDB" id="283830">
    <molecule id="Q80XD1-3"/>
</dbReference>
<dbReference type="DNASU" id="69993"/>
<dbReference type="Ensembl" id="ENSMUST00000067741.10">
    <molecule id="Q80XD1-1"/>
    <property type="protein sequence ID" value="ENSMUSP00000066078.8"/>
    <property type="gene ID" value="ENSMUSG00000004633.18"/>
</dbReference>
<dbReference type="Ensembl" id="ENSMUST00000114401.8">
    <molecule id="Q80XD1-3"/>
    <property type="protein sequence ID" value="ENSMUSP00000110043.2"/>
    <property type="gene ID" value="ENSMUSG00000004633.18"/>
</dbReference>
<dbReference type="Ensembl" id="ENSMUST00000146114.8">
    <molecule id="Q80XD1-2"/>
    <property type="protein sequence ID" value="ENSMUSP00000114476.2"/>
    <property type="gene ID" value="ENSMUSG00000004633.18"/>
</dbReference>
<dbReference type="GeneID" id="69993"/>
<dbReference type="KEGG" id="mmu:69993"/>
<dbReference type="UCSC" id="uc009bzr.2">
    <molecule id="Q80XD1-2"/>
    <property type="organism name" value="mouse"/>
</dbReference>
<dbReference type="UCSC" id="uc009bzt.2">
    <molecule id="Q80XD1-1"/>
    <property type="organism name" value="mouse"/>
</dbReference>
<dbReference type="AGR" id="MGI:1917243"/>
<dbReference type="CTD" id="1124"/>
<dbReference type="MGI" id="MGI:1917243">
    <property type="gene designation" value="Chn2"/>
</dbReference>
<dbReference type="VEuPathDB" id="HostDB:ENSMUSG00000004633"/>
<dbReference type="eggNOG" id="KOG1453">
    <property type="taxonomic scope" value="Eukaryota"/>
</dbReference>
<dbReference type="GeneTree" id="ENSGT01030000234635"/>
<dbReference type="InParanoid" id="Q80XD1"/>
<dbReference type="OrthoDB" id="3304at9989"/>
<dbReference type="PhylomeDB" id="Q80XD1"/>
<dbReference type="Reactome" id="R-MMU-9013149">
    <property type="pathway name" value="RAC1 GTPase cycle"/>
</dbReference>
<dbReference type="BioGRID-ORCS" id="69993">
    <property type="hits" value="4 hits in 79 CRISPR screens"/>
</dbReference>
<dbReference type="ChiTaRS" id="Chn2">
    <property type="organism name" value="mouse"/>
</dbReference>
<dbReference type="PRO" id="PR:Q80XD1"/>
<dbReference type="Proteomes" id="UP000000589">
    <property type="component" value="Chromosome 6"/>
</dbReference>
<dbReference type="RNAct" id="Q80XD1">
    <property type="molecule type" value="protein"/>
</dbReference>
<dbReference type="Bgee" id="ENSMUSG00000004633">
    <property type="expression patterns" value="Expressed in cerebellum lobe and 222 other cell types or tissues"/>
</dbReference>
<dbReference type="ExpressionAtlas" id="Q80XD1">
    <property type="expression patterns" value="baseline and differential"/>
</dbReference>
<dbReference type="GO" id="GO:0016020">
    <property type="term" value="C:membrane"/>
    <property type="evidence" value="ECO:0007669"/>
    <property type="project" value="UniProtKB-SubCell"/>
</dbReference>
<dbReference type="GO" id="GO:0045202">
    <property type="term" value="C:synapse"/>
    <property type="evidence" value="ECO:0000266"/>
    <property type="project" value="MGI"/>
</dbReference>
<dbReference type="GO" id="GO:0005096">
    <property type="term" value="F:GTPase activator activity"/>
    <property type="evidence" value="ECO:0000266"/>
    <property type="project" value="MGI"/>
</dbReference>
<dbReference type="GO" id="GO:0008270">
    <property type="term" value="F:zinc ion binding"/>
    <property type="evidence" value="ECO:0007669"/>
    <property type="project" value="UniProtKB-KW"/>
</dbReference>
<dbReference type="GO" id="GO:0007165">
    <property type="term" value="P:signal transduction"/>
    <property type="evidence" value="ECO:0007669"/>
    <property type="project" value="InterPro"/>
</dbReference>
<dbReference type="CDD" id="cd04372">
    <property type="entry name" value="RhoGAP_chimaerin"/>
    <property type="match status" value="1"/>
</dbReference>
<dbReference type="FunFam" id="1.10.555.10:FF:000005">
    <property type="entry name" value="Chimaerin"/>
    <property type="match status" value="1"/>
</dbReference>
<dbReference type="FunFam" id="3.30.60.20:FF:000025">
    <property type="entry name" value="Chimaerin"/>
    <property type="match status" value="1"/>
</dbReference>
<dbReference type="Gene3D" id="3.30.60.20">
    <property type="match status" value="1"/>
</dbReference>
<dbReference type="Gene3D" id="1.10.555.10">
    <property type="entry name" value="Rho GTPase activation protein"/>
    <property type="match status" value="1"/>
</dbReference>
<dbReference type="InterPro" id="IPR046349">
    <property type="entry name" value="C1-like_sf"/>
</dbReference>
<dbReference type="InterPro" id="IPR020454">
    <property type="entry name" value="DAG/PE-bd"/>
</dbReference>
<dbReference type="InterPro" id="IPR002219">
    <property type="entry name" value="PE/DAG-bd"/>
</dbReference>
<dbReference type="InterPro" id="IPR051854">
    <property type="entry name" value="Rho-type_GAP"/>
</dbReference>
<dbReference type="InterPro" id="IPR008936">
    <property type="entry name" value="Rho_GTPase_activation_prot"/>
</dbReference>
<dbReference type="InterPro" id="IPR037860">
    <property type="entry name" value="RhoGAP_chimaerin"/>
</dbReference>
<dbReference type="InterPro" id="IPR000198">
    <property type="entry name" value="RhoGAP_dom"/>
</dbReference>
<dbReference type="PANTHER" id="PTHR46075:SF4">
    <property type="entry name" value="BETA-CHIMAERIN"/>
    <property type="match status" value="1"/>
</dbReference>
<dbReference type="PANTHER" id="PTHR46075">
    <property type="entry name" value="CHIMERIN FAMILY MEMBER"/>
    <property type="match status" value="1"/>
</dbReference>
<dbReference type="Pfam" id="PF00130">
    <property type="entry name" value="C1_1"/>
    <property type="match status" value="1"/>
</dbReference>
<dbReference type="Pfam" id="PF00620">
    <property type="entry name" value="RhoGAP"/>
    <property type="match status" value="1"/>
</dbReference>
<dbReference type="PRINTS" id="PR00008">
    <property type="entry name" value="DAGPEDOMAIN"/>
</dbReference>
<dbReference type="SMART" id="SM00109">
    <property type="entry name" value="C1"/>
    <property type="match status" value="1"/>
</dbReference>
<dbReference type="SMART" id="SM00324">
    <property type="entry name" value="RhoGAP"/>
    <property type="match status" value="1"/>
</dbReference>
<dbReference type="SUPFAM" id="SSF57889">
    <property type="entry name" value="Cysteine-rich domain"/>
    <property type="match status" value="1"/>
</dbReference>
<dbReference type="SUPFAM" id="SSF48350">
    <property type="entry name" value="GTPase activation domain, GAP"/>
    <property type="match status" value="1"/>
</dbReference>
<dbReference type="PROSITE" id="PS50238">
    <property type="entry name" value="RHOGAP"/>
    <property type="match status" value="1"/>
</dbReference>
<dbReference type="PROSITE" id="PS00479">
    <property type="entry name" value="ZF_DAG_PE_1"/>
    <property type="match status" value="1"/>
</dbReference>
<dbReference type="PROSITE" id="PS50081">
    <property type="entry name" value="ZF_DAG_PE_2"/>
    <property type="match status" value="1"/>
</dbReference>
<name>CHIO_MOUSE</name>
<reference key="1">
    <citation type="submission" date="2000-09" db="EMBL/GenBank/DDBJ databases">
        <title>Characterization of mouse beta chimaerin.</title>
        <authorList>
            <person name="Prumer A."/>
            <person name="Heinlein U.A.O."/>
        </authorList>
    </citation>
    <scope>NUCLEOTIDE SEQUENCE [MRNA] (ISOFORM 3)</scope>
    <source>
        <tissue>Testis</tissue>
    </source>
</reference>
<reference key="2">
    <citation type="journal article" date="2005" name="Science">
        <title>The transcriptional landscape of the mammalian genome.</title>
        <authorList>
            <person name="Carninci P."/>
            <person name="Kasukawa T."/>
            <person name="Katayama S."/>
            <person name="Gough J."/>
            <person name="Frith M.C."/>
            <person name="Maeda N."/>
            <person name="Oyama R."/>
            <person name="Ravasi T."/>
            <person name="Lenhard B."/>
            <person name="Wells C."/>
            <person name="Kodzius R."/>
            <person name="Shimokawa K."/>
            <person name="Bajic V.B."/>
            <person name="Brenner S.E."/>
            <person name="Batalov S."/>
            <person name="Forrest A.R."/>
            <person name="Zavolan M."/>
            <person name="Davis M.J."/>
            <person name="Wilming L.G."/>
            <person name="Aidinis V."/>
            <person name="Allen J.E."/>
            <person name="Ambesi-Impiombato A."/>
            <person name="Apweiler R."/>
            <person name="Aturaliya R.N."/>
            <person name="Bailey T.L."/>
            <person name="Bansal M."/>
            <person name="Baxter L."/>
            <person name="Beisel K.W."/>
            <person name="Bersano T."/>
            <person name="Bono H."/>
            <person name="Chalk A.M."/>
            <person name="Chiu K.P."/>
            <person name="Choudhary V."/>
            <person name="Christoffels A."/>
            <person name="Clutterbuck D.R."/>
            <person name="Crowe M.L."/>
            <person name="Dalla E."/>
            <person name="Dalrymple B.P."/>
            <person name="de Bono B."/>
            <person name="Della Gatta G."/>
            <person name="di Bernardo D."/>
            <person name="Down T."/>
            <person name="Engstrom P."/>
            <person name="Fagiolini M."/>
            <person name="Faulkner G."/>
            <person name="Fletcher C.F."/>
            <person name="Fukushima T."/>
            <person name="Furuno M."/>
            <person name="Futaki S."/>
            <person name="Gariboldi M."/>
            <person name="Georgii-Hemming P."/>
            <person name="Gingeras T.R."/>
            <person name="Gojobori T."/>
            <person name="Green R.E."/>
            <person name="Gustincich S."/>
            <person name="Harbers M."/>
            <person name="Hayashi Y."/>
            <person name="Hensch T.K."/>
            <person name="Hirokawa N."/>
            <person name="Hill D."/>
            <person name="Huminiecki L."/>
            <person name="Iacono M."/>
            <person name="Ikeo K."/>
            <person name="Iwama A."/>
            <person name="Ishikawa T."/>
            <person name="Jakt M."/>
            <person name="Kanapin A."/>
            <person name="Katoh M."/>
            <person name="Kawasawa Y."/>
            <person name="Kelso J."/>
            <person name="Kitamura H."/>
            <person name="Kitano H."/>
            <person name="Kollias G."/>
            <person name="Krishnan S.P."/>
            <person name="Kruger A."/>
            <person name="Kummerfeld S.K."/>
            <person name="Kurochkin I.V."/>
            <person name="Lareau L.F."/>
            <person name="Lazarevic D."/>
            <person name="Lipovich L."/>
            <person name="Liu J."/>
            <person name="Liuni S."/>
            <person name="McWilliam S."/>
            <person name="Madan Babu M."/>
            <person name="Madera M."/>
            <person name="Marchionni L."/>
            <person name="Matsuda H."/>
            <person name="Matsuzawa S."/>
            <person name="Miki H."/>
            <person name="Mignone F."/>
            <person name="Miyake S."/>
            <person name="Morris K."/>
            <person name="Mottagui-Tabar S."/>
            <person name="Mulder N."/>
            <person name="Nakano N."/>
            <person name="Nakauchi H."/>
            <person name="Ng P."/>
            <person name="Nilsson R."/>
            <person name="Nishiguchi S."/>
            <person name="Nishikawa S."/>
            <person name="Nori F."/>
            <person name="Ohara O."/>
            <person name="Okazaki Y."/>
            <person name="Orlando V."/>
            <person name="Pang K.C."/>
            <person name="Pavan W.J."/>
            <person name="Pavesi G."/>
            <person name="Pesole G."/>
            <person name="Petrovsky N."/>
            <person name="Piazza S."/>
            <person name="Reed J."/>
            <person name="Reid J.F."/>
            <person name="Ring B.Z."/>
            <person name="Ringwald M."/>
            <person name="Rost B."/>
            <person name="Ruan Y."/>
            <person name="Salzberg S.L."/>
            <person name="Sandelin A."/>
            <person name="Schneider C."/>
            <person name="Schoenbach C."/>
            <person name="Sekiguchi K."/>
            <person name="Semple C.A."/>
            <person name="Seno S."/>
            <person name="Sessa L."/>
            <person name="Sheng Y."/>
            <person name="Shibata Y."/>
            <person name="Shimada H."/>
            <person name="Shimada K."/>
            <person name="Silva D."/>
            <person name="Sinclair B."/>
            <person name="Sperling S."/>
            <person name="Stupka E."/>
            <person name="Sugiura K."/>
            <person name="Sultana R."/>
            <person name="Takenaka Y."/>
            <person name="Taki K."/>
            <person name="Tammoja K."/>
            <person name="Tan S.L."/>
            <person name="Tang S."/>
            <person name="Taylor M.S."/>
            <person name="Tegner J."/>
            <person name="Teichmann S.A."/>
            <person name="Ueda H.R."/>
            <person name="van Nimwegen E."/>
            <person name="Verardo R."/>
            <person name="Wei C.L."/>
            <person name="Yagi K."/>
            <person name="Yamanishi H."/>
            <person name="Zabarovsky E."/>
            <person name="Zhu S."/>
            <person name="Zimmer A."/>
            <person name="Hide W."/>
            <person name="Bult C."/>
            <person name="Grimmond S.M."/>
            <person name="Teasdale R.D."/>
            <person name="Liu E.T."/>
            <person name="Brusic V."/>
            <person name="Quackenbush J."/>
            <person name="Wahlestedt C."/>
            <person name="Mattick J.S."/>
            <person name="Hume D.A."/>
            <person name="Kai C."/>
            <person name="Sasaki D."/>
            <person name="Tomaru Y."/>
            <person name="Fukuda S."/>
            <person name="Kanamori-Katayama M."/>
            <person name="Suzuki M."/>
            <person name="Aoki J."/>
            <person name="Arakawa T."/>
            <person name="Iida J."/>
            <person name="Imamura K."/>
            <person name="Itoh M."/>
            <person name="Kato T."/>
            <person name="Kawaji H."/>
            <person name="Kawagashira N."/>
            <person name="Kawashima T."/>
            <person name="Kojima M."/>
            <person name="Kondo S."/>
            <person name="Konno H."/>
            <person name="Nakano K."/>
            <person name="Ninomiya N."/>
            <person name="Nishio T."/>
            <person name="Okada M."/>
            <person name="Plessy C."/>
            <person name="Shibata K."/>
            <person name="Shiraki T."/>
            <person name="Suzuki S."/>
            <person name="Tagami M."/>
            <person name="Waki K."/>
            <person name="Watahiki A."/>
            <person name="Okamura-Oho Y."/>
            <person name="Suzuki H."/>
            <person name="Kawai J."/>
            <person name="Hayashizaki Y."/>
        </authorList>
    </citation>
    <scope>NUCLEOTIDE SEQUENCE [LARGE SCALE MRNA] (ISOFORM 2)</scope>
    <source>
        <strain>C57BL/6J</strain>
        <tissue>Testis</tissue>
    </source>
</reference>
<reference key="3">
    <citation type="journal article" date="2004" name="Genome Res.">
        <title>The status, quality, and expansion of the NIH full-length cDNA project: the Mammalian Gene Collection (MGC).</title>
        <authorList>
            <consortium name="The MGC Project Team"/>
        </authorList>
    </citation>
    <scope>NUCLEOTIDE SEQUENCE [LARGE SCALE MRNA] (ISOFORM 1)</scope>
    <source>
        <tissue>Brain</tissue>
    </source>
</reference>
<reference key="4">
    <citation type="journal article" date="2010" name="Cell">
        <title>A tissue-specific atlas of mouse protein phosphorylation and expression.</title>
        <authorList>
            <person name="Huttlin E.L."/>
            <person name="Jedrychowski M.P."/>
            <person name="Elias J.E."/>
            <person name="Goswami T."/>
            <person name="Rad R."/>
            <person name="Beausoleil S.A."/>
            <person name="Villen J."/>
            <person name="Haas W."/>
            <person name="Sowa M.E."/>
            <person name="Gygi S.P."/>
        </authorList>
    </citation>
    <scope>IDENTIFICATION BY MASS SPECTROMETRY [LARGE SCALE ANALYSIS]</scope>
    <source>
        <tissue>Brain</tissue>
        <tissue>Testis</tissue>
    </source>
</reference>
<evidence type="ECO:0000250" key="1"/>
<evidence type="ECO:0000255" key="2">
    <source>
        <dbReference type="PROSITE-ProRule" id="PRU00172"/>
    </source>
</evidence>
<evidence type="ECO:0000255" key="3">
    <source>
        <dbReference type="PROSITE-ProRule" id="PRU00226"/>
    </source>
</evidence>
<evidence type="ECO:0000303" key="4">
    <source>
    </source>
</evidence>
<evidence type="ECO:0000303" key="5">
    <source ref="1"/>
</evidence>
<evidence type="ECO:0000305" key="6"/>
<comment type="function">
    <text evidence="1">GTPase-activating protein for p21-rac.</text>
</comment>
<comment type="activity regulation">
    <text evidence="1">In the inactive state, the N terminus protrudes into the active site of the Rho-GAP domain, sterically blocking Rac binding. Phospholipid binding to the Phorbol-ester/DAG-type zinc-finger/C1 domain triggers the cooperative dissociation of these interactions, allowing the N-terminus to move out of the active site and thereby activating the enzyme (By similarity).</text>
</comment>
<comment type="subcellular location">
    <subcellularLocation>
        <location evidence="6">Membrane</location>
        <topology evidence="6">Peripheral membrane protein</topology>
    </subcellularLocation>
</comment>
<comment type="alternative products">
    <event type="alternative splicing"/>
    <isoform>
        <id>Q80XD1-1</id>
        <name>1</name>
        <sequence type="displayed"/>
    </isoform>
    <isoform>
        <id>Q80XD1-2</id>
        <name>2</name>
        <sequence type="described" ref="VSP_014244 VSP_014245"/>
    </isoform>
    <isoform>
        <id>Q80XD1-3</id>
        <name>3</name>
        <sequence type="described" ref="VSP_014243 VSP_014246"/>
    </isoform>
</comment>
<comment type="sequence caution" evidence="6">
    <molecule>Isoform 3</molecule>
    <conflict type="frameshift">
        <sequence resource="EMBL-CDS" id="CAC08453"/>
    </conflict>
</comment>
<organism>
    <name type="scientific">Mus musculus</name>
    <name type="common">Mouse</name>
    <dbReference type="NCBI Taxonomy" id="10090"/>
    <lineage>
        <taxon>Eukaryota</taxon>
        <taxon>Metazoa</taxon>
        <taxon>Chordata</taxon>
        <taxon>Craniata</taxon>
        <taxon>Vertebrata</taxon>
        <taxon>Euteleostomi</taxon>
        <taxon>Mammalia</taxon>
        <taxon>Eutheria</taxon>
        <taxon>Euarchontoglires</taxon>
        <taxon>Glires</taxon>
        <taxon>Rodentia</taxon>
        <taxon>Myomorpha</taxon>
        <taxon>Muroidea</taxon>
        <taxon>Muridae</taxon>
        <taxon>Murinae</taxon>
        <taxon>Mus</taxon>
        <taxon>Mus</taxon>
    </lineage>
</organism>
<accession>Q80XD1</accession>
<accession>Q9D9W2</accession>
<accession>Q9ER57</accession>